<proteinExistence type="evidence at transcript level"/>
<keyword id="KW-0007">Acetylation</keyword>
<keyword id="KW-0175">Coiled coil</keyword>
<keyword id="KW-0238">DNA-binding</keyword>
<keyword id="KW-1017">Isopeptide bond</keyword>
<keyword id="KW-0507">mRNA processing</keyword>
<keyword id="KW-0508">mRNA splicing</keyword>
<keyword id="KW-0539">Nucleus</keyword>
<keyword id="KW-0597">Phosphoprotein</keyword>
<keyword id="KW-1185">Reference proteome</keyword>
<keyword id="KW-0832">Ubl conjugation</keyword>
<evidence type="ECO:0000250" key="1"/>
<evidence type="ECO:0000250" key="2">
    <source>
        <dbReference type="UniProtKB" id="O95232"/>
    </source>
</evidence>
<evidence type="ECO:0000255" key="3"/>
<evidence type="ECO:0000256" key="4">
    <source>
        <dbReference type="SAM" id="MobiDB-lite"/>
    </source>
</evidence>
<evidence type="ECO:0000305" key="5"/>
<dbReference type="EMBL" id="BC104519">
    <property type="protein sequence ID" value="AAI04520.1"/>
    <property type="molecule type" value="mRNA"/>
</dbReference>
<dbReference type="RefSeq" id="NP_001029856.1">
    <property type="nucleotide sequence ID" value="NM_001034684.1"/>
</dbReference>
<dbReference type="RefSeq" id="XP_005220659.1">
    <property type="nucleotide sequence ID" value="XM_005220602.1"/>
</dbReference>
<dbReference type="SMR" id="Q3SX41"/>
<dbReference type="FunCoup" id="Q3SX41">
    <property type="interactions" value="4375"/>
</dbReference>
<dbReference type="STRING" id="9913.ENSBTAP00000065992"/>
<dbReference type="PaxDb" id="9913-ENSBTAP00000002938"/>
<dbReference type="PeptideAtlas" id="Q3SX41"/>
<dbReference type="Ensembl" id="ENSBTAT00000002938.5">
    <property type="protein sequence ID" value="ENSBTAP00000002938.4"/>
    <property type="gene ID" value="ENSBTAG00000002279.6"/>
</dbReference>
<dbReference type="GeneID" id="539955"/>
<dbReference type="KEGG" id="bta:539955"/>
<dbReference type="CTD" id="51747"/>
<dbReference type="VEuPathDB" id="HostDB:ENSBTAG00000002279"/>
<dbReference type="VGNC" id="VGNC:31080">
    <property type="gene designation" value="LUC7L3"/>
</dbReference>
<dbReference type="eggNOG" id="KOG0796">
    <property type="taxonomic scope" value="Eukaryota"/>
</dbReference>
<dbReference type="GeneTree" id="ENSGT00950000183213"/>
<dbReference type="HOGENOM" id="CLU_030397_0_1_1"/>
<dbReference type="InParanoid" id="Q3SX41"/>
<dbReference type="OrthoDB" id="10266921at2759"/>
<dbReference type="TreeFam" id="TF354312"/>
<dbReference type="Reactome" id="R-BTA-72163">
    <property type="pathway name" value="mRNA Splicing - Major Pathway"/>
</dbReference>
<dbReference type="Proteomes" id="UP000009136">
    <property type="component" value="Chromosome 19"/>
</dbReference>
<dbReference type="Bgee" id="ENSBTAG00000002279">
    <property type="expression patterns" value="Expressed in thymus and 106 other cell types or tissues"/>
</dbReference>
<dbReference type="GO" id="GO:0016607">
    <property type="term" value="C:nuclear speck"/>
    <property type="evidence" value="ECO:0007669"/>
    <property type="project" value="UniProtKB-SubCell"/>
</dbReference>
<dbReference type="GO" id="GO:0005634">
    <property type="term" value="C:nucleus"/>
    <property type="evidence" value="ECO:0000250"/>
    <property type="project" value="UniProtKB"/>
</dbReference>
<dbReference type="GO" id="GO:0005685">
    <property type="term" value="C:U1 snRNP"/>
    <property type="evidence" value="ECO:0000318"/>
    <property type="project" value="GO_Central"/>
</dbReference>
<dbReference type="GO" id="GO:0071004">
    <property type="term" value="C:U2-type prespliceosome"/>
    <property type="evidence" value="ECO:0000318"/>
    <property type="project" value="GO_Central"/>
</dbReference>
<dbReference type="GO" id="GO:0003677">
    <property type="term" value="F:DNA binding"/>
    <property type="evidence" value="ECO:0007669"/>
    <property type="project" value="UniProtKB-KW"/>
</dbReference>
<dbReference type="GO" id="GO:0003729">
    <property type="term" value="F:mRNA binding"/>
    <property type="evidence" value="ECO:0000250"/>
    <property type="project" value="UniProtKB"/>
</dbReference>
<dbReference type="GO" id="GO:0006376">
    <property type="term" value="P:mRNA splice site recognition"/>
    <property type="evidence" value="ECO:0000318"/>
    <property type="project" value="GO_Central"/>
</dbReference>
<dbReference type="GO" id="GO:0008380">
    <property type="term" value="P:RNA splicing"/>
    <property type="evidence" value="ECO:0000250"/>
    <property type="project" value="UniProtKB"/>
</dbReference>
<dbReference type="InterPro" id="IPR004882">
    <property type="entry name" value="Luc7-rel"/>
</dbReference>
<dbReference type="PANTHER" id="PTHR12375">
    <property type="entry name" value="RNA-BINDING PROTEIN LUC7-RELATED"/>
    <property type="match status" value="1"/>
</dbReference>
<dbReference type="Pfam" id="PF03194">
    <property type="entry name" value="LUC7"/>
    <property type="match status" value="1"/>
</dbReference>
<organism>
    <name type="scientific">Bos taurus</name>
    <name type="common">Bovine</name>
    <dbReference type="NCBI Taxonomy" id="9913"/>
    <lineage>
        <taxon>Eukaryota</taxon>
        <taxon>Metazoa</taxon>
        <taxon>Chordata</taxon>
        <taxon>Craniata</taxon>
        <taxon>Vertebrata</taxon>
        <taxon>Euteleostomi</taxon>
        <taxon>Mammalia</taxon>
        <taxon>Eutheria</taxon>
        <taxon>Laurasiatheria</taxon>
        <taxon>Artiodactyla</taxon>
        <taxon>Ruminantia</taxon>
        <taxon>Pecora</taxon>
        <taxon>Bovidae</taxon>
        <taxon>Bovinae</taxon>
        <taxon>Bos</taxon>
    </lineage>
</organism>
<name>LC7L3_BOVIN</name>
<sequence>MISAAQLLDELMGRDRNLAPDEKRSNVRWDHESVCKYYLCGFCPAELFTNTRSDLGPCEKIHDENLRKQYEKSSRFMKVGYERDFLRYLQSLLAEVERRIRRGHARLALSQNQQSSGAAGPTGKNEEKIQVLTDKIDVLLQQIEELGSEGKVEEAQGMMKLVEQLKEERELLRSTTSTIESFAAQEKQMEVCEVCGAFLIVGDAQSRVDDHLMGKQHMGYAKIKATVEELKEKLRKRTEEPDRDERLKKEKQEREEREKEREREREERERKRRREEEEREKERARDRERRKRSRSRSRHSSRTSDRRCSRSRDHKRSRSRERRRSRSRDRRRSRSHDRSERKHRSRSRDRRRSKSRDRKSYKHRSKSRDREQDRKSKEKEKRGSDDKKSSVKSSSREKQSEDTNTESKESDTKNEVNGTSEDIKSEGDTQSN</sequence>
<accession>Q3SX41</accession>
<reference key="1">
    <citation type="submission" date="2005-09" db="EMBL/GenBank/DDBJ databases">
        <authorList>
            <consortium name="NIH - Mammalian Gene Collection (MGC) project"/>
        </authorList>
    </citation>
    <scope>NUCLEOTIDE SEQUENCE [LARGE SCALE MRNA]</scope>
    <source>
        <strain>Hereford</strain>
        <tissue>Ascending colon</tissue>
    </source>
</reference>
<protein>
    <recommendedName>
        <fullName>Luc7-like protein 3</fullName>
    </recommendedName>
    <alternativeName>
        <fullName>Cisplatin resistance-associated-overexpressed protein</fullName>
    </alternativeName>
</protein>
<feature type="chain" id="PRO_0000233410" description="Luc7-like protein 3">
    <location>
        <begin position="1"/>
        <end position="432"/>
    </location>
</feature>
<feature type="region of interest" description="Disordered" evidence="4">
    <location>
        <begin position="234"/>
        <end position="432"/>
    </location>
</feature>
<feature type="coiled-coil region" evidence="3">
    <location>
        <begin position="124"/>
        <end position="181"/>
    </location>
</feature>
<feature type="compositionally biased region" description="Basic and acidic residues" evidence="4">
    <location>
        <begin position="234"/>
        <end position="287"/>
    </location>
</feature>
<feature type="compositionally biased region" description="Basic residues" evidence="4">
    <location>
        <begin position="288"/>
        <end position="301"/>
    </location>
</feature>
<feature type="compositionally biased region" description="Basic and acidic residues" evidence="4">
    <location>
        <begin position="302"/>
        <end position="311"/>
    </location>
</feature>
<feature type="compositionally biased region" description="Basic residues" evidence="4">
    <location>
        <begin position="312"/>
        <end position="367"/>
    </location>
</feature>
<feature type="compositionally biased region" description="Basic and acidic residues" evidence="4">
    <location>
        <begin position="368"/>
        <end position="414"/>
    </location>
</feature>
<feature type="compositionally biased region" description="Basic and acidic residues" evidence="4">
    <location>
        <begin position="421"/>
        <end position="432"/>
    </location>
</feature>
<feature type="modified residue" description="N-acetylmethionine" evidence="2">
    <location>
        <position position="1"/>
    </location>
</feature>
<feature type="modified residue" description="Phosphoserine" evidence="2">
    <location>
        <position position="3"/>
    </location>
</feature>
<feature type="modified residue" description="Phosphoserine" evidence="2">
    <location>
        <position position="110"/>
    </location>
</feature>
<feature type="modified residue" description="Phosphoserine" evidence="2">
    <location>
        <position position="115"/>
    </location>
</feature>
<feature type="modified residue" description="N6-acetyllysine" evidence="2">
    <location>
        <position position="231"/>
    </location>
</feature>
<feature type="modified residue" description="Phosphoserine" evidence="2">
    <location>
        <position position="420"/>
    </location>
</feature>
<feature type="modified residue" description="Phosphoserine" evidence="2">
    <location>
        <position position="425"/>
    </location>
</feature>
<feature type="modified residue" description="Phosphoserine" evidence="2">
    <location>
        <position position="431"/>
    </location>
</feature>
<feature type="cross-link" description="Glycyl lysine isopeptide (Lys-Gly) (interchain with G-Cter in SUMO1); alternate" evidence="2">
    <location>
        <position position="424"/>
    </location>
</feature>
<feature type="cross-link" description="Glycyl lysine isopeptide (Lys-Gly) (interchain with G-Cter in SUMO2); alternate" evidence="2">
    <location>
        <position position="424"/>
    </location>
</feature>
<comment type="function">
    <text evidence="1">Binds cAMP regulatory element DNA sequence. May play a role in RNA splicing (By similarity).</text>
</comment>
<comment type="subunit">
    <text evidence="2">May interact with SFRS1 and form homodimers. Interacts with JMJD6. Interacts with RBM25. Interacts with RSRC1 (via Arg/Ser-rich domain). Interacts with RRP1B.</text>
</comment>
<comment type="subcellular location">
    <subcellularLocation>
        <location evidence="1">Nucleus speckle</location>
    </subcellularLocation>
</comment>
<comment type="similarity">
    <text evidence="5">Belongs to the Luc7 family.</text>
</comment>
<gene>
    <name type="primary">LUC7L3</name>
    <name type="synonym">CROP</name>
</gene>